<sequence length="207" mass="22128">MLVYWLDIVGTAVFAISGVLLAGKLRMDPFGVLVLGVVTAVGGGTIRDMALDHGPVFWVKDPTDLVVAMVTSMLTIVLVRQPRRLPKWMLPVLDAVGLAVFVGIGVNKAFNAEAGPLIAVCMGVITGVGGGIIRDVLAREIPMILRTEIYATACIIGGIVHATAYYTFSVPLETASMMGMVVTLLIRLAAIRWHLKLPTFALDENGR</sequence>
<feature type="chain" id="PRO_0000166298" description="UPF0126 inner membrane protein YadS">
    <location>
        <begin position="1"/>
        <end position="207"/>
    </location>
</feature>
<feature type="transmembrane region" description="Helical" evidence="2">
    <location>
        <begin position="1"/>
        <end position="21"/>
    </location>
</feature>
<feature type="topological domain" description="Cytoplasmic" evidence="2">
    <location>
        <begin position="22"/>
        <end position="29"/>
    </location>
</feature>
<feature type="transmembrane region" description="Helical" evidence="2">
    <location>
        <begin position="30"/>
        <end position="50"/>
    </location>
</feature>
<feature type="topological domain" description="Periplasmic" evidence="2">
    <location>
        <begin position="51"/>
        <end position="58"/>
    </location>
</feature>
<feature type="transmembrane region" description="Helical" evidence="2">
    <location>
        <begin position="59"/>
        <end position="79"/>
    </location>
</feature>
<feature type="topological domain" description="Cytoplasmic" evidence="2">
    <location>
        <begin position="80"/>
        <end position="85"/>
    </location>
</feature>
<feature type="transmembrane region" description="Helical" evidence="2">
    <location>
        <begin position="86"/>
        <end position="106"/>
    </location>
</feature>
<feature type="topological domain" description="Periplasmic" evidence="2">
    <location>
        <begin position="107"/>
        <end position="112"/>
    </location>
</feature>
<feature type="transmembrane region" description="Helical" evidence="2">
    <location>
        <begin position="113"/>
        <end position="133"/>
    </location>
</feature>
<feature type="topological domain" description="Cytoplasmic" evidence="2">
    <location>
        <begin position="134"/>
        <end position="148"/>
    </location>
</feature>
<feature type="transmembrane region" description="Helical" evidence="2">
    <location>
        <begin position="149"/>
        <end position="169"/>
    </location>
</feature>
<feature type="topological domain" description="Periplasmic" evidence="2">
    <location>
        <position position="170"/>
    </location>
</feature>
<feature type="transmembrane region" description="Helical" evidence="2">
    <location>
        <begin position="171"/>
        <end position="191"/>
    </location>
</feature>
<feature type="topological domain" description="Cytoplasmic" evidence="2">
    <location>
        <begin position="192"/>
        <end position="207"/>
    </location>
</feature>
<protein>
    <recommendedName>
        <fullName>UPF0126 inner membrane protein YadS</fullName>
    </recommendedName>
</protein>
<gene>
    <name type="primary">yadS</name>
    <name type="ordered locus">c0193</name>
</gene>
<proteinExistence type="inferred from homology"/>
<name>YADS_ECOL6</name>
<evidence type="ECO:0000250" key="1"/>
<evidence type="ECO:0000255" key="2"/>
<evidence type="ECO:0000305" key="3"/>
<accession>P0AFP1</accession>
<accession>P37027</accession>
<organism>
    <name type="scientific">Escherichia coli O6:H1 (strain CFT073 / ATCC 700928 / UPEC)</name>
    <dbReference type="NCBI Taxonomy" id="199310"/>
    <lineage>
        <taxon>Bacteria</taxon>
        <taxon>Pseudomonadati</taxon>
        <taxon>Pseudomonadota</taxon>
        <taxon>Gammaproteobacteria</taxon>
        <taxon>Enterobacterales</taxon>
        <taxon>Enterobacteriaceae</taxon>
        <taxon>Escherichia</taxon>
    </lineage>
</organism>
<reference key="1">
    <citation type="journal article" date="2002" name="Proc. Natl. Acad. Sci. U.S.A.">
        <title>Extensive mosaic structure revealed by the complete genome sequence of uropathogenic Escherichia coli.</title>
        <authorList>
            <person name="Welch R.A."/>
            <person name="Burland V."/>
            <person name="Plunkett G. III"/>
            <person name="Redford P."/>
            <person name="Roesch P."/>
            <person name="Rasko D."/>
            <person name="Buckles E.L."/>
            <person name="Liou S.-R."/>
            <person name="Boutin A."/>
            <person name="Hackett J."/>
            <person name="Stroud D."/>
            <person name="Mayhew G.F."/>
            <person name="Rose D.J."/>
            <person name="Zhou S."/>
            <person name="Schwartz D.C."/>
            <person name="Perna N.T."/>
            <person name="Mobley H.L.T."/>
            <person name="Donnenberg M.S."/>
            <person name="Blattner F.R."/>
        </authorList>
    </citation>
    <scope>NUCLEOTIDE SEQUENCE [LARGE SCALE GENOMIC DNA]</scope>
    <source>
        <strain>CFT073 / ATCC 700928 / UPEC</strain>
    </source>
</reference>
<keyword id="KW-0997">Cell inner membrane</keyword>
<keyword id="KW-1003">Cell membrane</keyword>
<keyword id="KW-0472">Membrane</keyword>
<keyword id="KW-1185">Reference proteome</keyword>
<keyword id="KW-0812">Transmembrane</keyword>
<keyword id="KW-1133">Transmembrane helix</keyword>
<dbReference type="EMBL" id="AE014075">
    <property type="protein sequence ID" value="AAN78687.1"/>
    <property type="molecule type" value="Genomic_DNA"/>
</dbReference>
<dbReference type="RefSeq" id="WP_000964221.1">
    <property type="nucleotide sequence ID" value="NZ_CP051263.1"/>
</dbReference>
<dbReference type="SMR" id="P0AFP1"/>
<dbReference type="STRING" id="199310.c0193"/>
<dbReference type="KEGG" id="ecc:c0193"/>
<dbReference type="eggNOG" id="COG2860">
    <property type="taxonomic scope" value="Bacteria"/>
</dbReference>
<dbReference type="HOGENOM" id="CLU_064906_2_1_6"/>
<dbReference type="BioCyc" id="ECOL199310:C0193-MONOMER"/>
<dbReference type="Proteomes" id="UP000001410">
    <property type="component" value="Chromosome"/>
</dbReference>
<dbReference type="GO" id="GO:0005886">
    <property type="term" value="C:plasma membrane"/>
    <property type="evidence" value="ECO:0007669"/>
    <property type="project" value="UniProtKB-SubCell"/>
</dbReference>
<dbReference type="InterPro" id="IPR005115">
    <property type="entry name" value="Gly_transporter"/>
</dbReference>
<dbReference type="NCBIfam" id="NF007874">
    <property type="entry name" value="PRK10578.1"/>
    <property type="match status" value="1"/>
</dbReference>
<dbReference type="PANTHER" id="PTHR30506">
    <property type="entry name" value="INNER MEMBRANE PROTEIN"/>
    <property type="match status" value="1"/>
</dbReference>
<dbReference type="PANTHER" id="PTHR30506:SF3">
    <property type="entry name" value="UPF0126 INNER MEMBRANE PROTEIN YADS-RELATED"/>
    <property type="match status" value="1"/>
</dbReference>
<dbReference type="Pfam" id="PF03458">
    <property type="entry name" value="Gly_transporter"/>
    <property type="match status" value="2"/>
</dbReference>
<comment type="subcellular location">
    <subcellularLocation>
        <location evidence="1">Cell inner membrane</location>
        <topology evidence="1">Multi-pass membrane protein</topology>
    </subcellularLocation>
</comment>
<comment type="similarity">
    <text evidence="3">Belongs to the UPF0126 family.</text>
</comment>